<comment type="function">
    <text evidence="2 3">Translation factor specific for subunit 6 of the mitochondrial ATPase. Required for assembly of the CF(0) component of the ATPase.</text>
</comment>
<comment type="subcellular location">
    <subcellularLocation>
        <location evidence="2">Mitochondrion inner membrane</location>
        <topology evidence="2">Peripheral membrane protein</topology>
        <orientation evidence="2">Matrix side</orientation>
    </subcellularLocation>
</comment>
<comment type="similarity">
    <text evidence="4">Belongs to the ATP22 family.</text>
</comment>
<comment type="sequence caution" evidence="4">
    <conflict type="frameshift">
        <sequence resource="EMBL-CDS" id="AAB64786"/>
    </conflict>
</comment>
<name>ATP22_YEAST</name>
<reference key="1">
    <citation type="submission" date="1995-07" db="EMBL/GenBank/DDBJ databases">
        <authorList>
            <person name="Zhang Y."/>
            <person name="Robinson K.M."/>
            <person name="Lemire B.D."/>
        </authorList>
    </citation>
    <scope>NUCLEOTIDE SEQUENCE [GENOMIC DNA]</scope>
    <source>
        <strain>MH125</strain>
    </source>
</reference>
<reference key="2">
    <citation type="journal article" date="1997" name="Nature">
        <title>The nucleotide sequence of Saccharomyces cerevisiae chromosome IV.</title>
        <authorList>
            <person name="Jacq C."/>
            <person name="Alt-Moerbe J."/>
            <person name="Andre B."/>
            <person name="Arnold W."/>
            <person name="Bahr A."/>
            <person name="Ballesta J.P.G."/>
            <person name="Bargues M."/>
            <person name="Baron L."/>
            <person name="Becker A."/>
            <person name="Biteau N."/>
            <person name="Bloecker H."/>
            <person name="Blugeon C."/>
            <person name="Boskovic J."/>
            <person name="Brandt P."/>
            <person name="Brueckner M."/>
            <person name="Buitrago M.J."/>
            <person name="Coster F."/>
            <person name="Delaveau T."/>
            <person name="del Rey F."/>
            <person name="Dujon B."/>
            <person name="Eide L.G."/>
            <person name="Garcia-Cantalejo J.M."/>
            <person name="Goffeau A."/>
            <person name="Gomez-Peris A."/>
            <person name="Granotier C."/>
            <person name="Hanemann V."/>
            <person name="Hankeln T."/>
            <person name="Hoheisel J.D."/>
            <person name="Jaeger W."/>
            <person name="Jimenez A."/>
            <person name="Jonniaux J.-L."/>
            <person name="Kraemer C."/>
            <person name="Kuester H."/>
            <person name="Laamanen P."/>
            <person name="Legros Y."/>
            <person name="Louis E.J."/>
            <person name="Moeller-Rieker S."/>
            <person name="Monnet A."/>
            <person name="Moro M."/>
            <person name="Mueller-Auer S."/>
            <person name="Nussbaumer B."/>
            <person name="Paricio N."/>
            <person name="Paulin L."/>
            <person name="Perea J."/>
            <person name="Perez-Alonso M."/>
            <person name="Perez-Ortin J.E."/>
            <person name="Pohl T.M."/>
            <person name="Prydz H."/>
            <person name="Purnelle B."/>
            <person name="Rasmussen S.W."/>
            <person name="Remacha M.A."/>
            <person name="Revuelta J.L."/>
            <person name="Rieger M."/>
            <person name="Salom D."/>
            <person name="Saluz H.P."/>
            <person name="Saiz J.E."/>
            <person name="Saren A.-M."/>
            <person name="Schaefer M."/>
            <person name="Scharfe M."/>
            <person name="Schmidt E.R."/>
            <person name="Schneider C."/>
            <person name="Scholler P."/>
            <person name="Schwarz S."/>
            <person name="Soler-Mira A."/>
            <person name="Urrestarazu L.A."/>
            <person name="Verhasselt P."/>
            <person name="Vissers S."/>
            <person name="Voet M."/>
            <person name="Volckaert G."/>
            <person name="Wagner G."/>
            <person name="Wambutt R."/>
            <person name="Wedler E."/>
            <person name="Wedler H."/>
            <person name="Woelfl S."/>
            <person name="Harris D.E."/>
            <person name="Bowman S."/>
            <person name="Brown D."/>
            <person name="Churcher C.M."/>
            <person name="Connor R."/>
            <person name="Dedman K."/>
            <person name="Gentles S."/>
            <person name="Hamlin N."/>
            <person name="Hunt S."/>
            <person name="Jones L."/>
            <person name="McDonald S."/>
            <person name="Murphy L.D."/>
            <person name="Niblett D."/>
            <person name="Odell C."/>
            <person name="Oliver K."/>
            <person name="Rajandream M.A."/>
            <person name="Richards C."/>
            <person name="Shore L."/>
            <person name="Walsh S.V."/>
            <person name="Barrell B.G."/>
            <person name="Dietrich F.S."/>
            <person name="Mulligan J.T."/>
            <person name="Allen E."/>
            <person name="Araujo R."/>
            <person name="Aviles E."/>
            <person name="Berno A."/>
            <person name="Carpenter J."/>
            <person name="Chen E."/>
            <person name="Cherry J.M."/>
            <person name="Chung E."/>
            <person name="Duncan M."/>
            <person name="Hunicke-Smith S."/>
            <person name="Hyman R.W."/>
            <person name="Komp C."/>
            <person name="Lashkari D."/>
            <person name="Lew H."/>
            <person name="Lin D."/>
            <person name="Mosedale D."/>
            <person name="Nakahara K."/>
            <person name="Namath A."/>
            <person name="Oefner P."/>
            <person name="Oh C."/>
            <person name="Petel F.X."/>
            <person name="Roberts D."/>
            <person name="Schramm S."/>
            <person name="Schroeder M."/>
            <person name="Shogren T."/>
            <person name="Shroff N."/>
            <person name="Winant A."/>
            <person name="Yelton M.A."/>
            <person name="Botstein D."/>
            <person name="Davis R.W."/>
            <person name="Johnston M."/>
            <person name="Andrews S."/>
            <person name="Brinkman R."/>
            <person name="Cooper J."/>
            <person name="Ding H."/>
            <person name="Du Z."/>
            <person name="Favello A."/>
            <person name="Fulton L."/>
            <person name="Gattung S."/>
            <person name="Greco T."/>
            <person name="Hallsworth K."/>
            <person name="Hawkins J."/>
            <person name="Hillier L.W."/>
            <person name="Jier M."/>
            <person name="Johnson D."/>
            <person name="Johnston L."/>
            <person name="Kirsten J."/>
            <person name="Kucaba T."/>
            <person name="Langston Y."/>
            <person name="Latreille P."/>
            <person name="Le T."/>
            <person name="Mardis E."/>
            <person name="Menezes S."/>
            <person name="Miller N."/>
            <person name="Nhan M."/>
            <person name="Pauley A."/>
            <person name="Peluso D."/>
            <person name="Rifkin L."/>
            <person name="Riles L."/>
            <person name="Taich A."/>
            <person name="Trevaskis E."/>
            <person name="Vignati D."/>
            <person name="Wilcox L."/>
            <person name="Wohldman P."/>
            <person name="Vaudin M."/>
            <person name="Wilson R."/>
            <person name="Waterston R."/>
            <person name="Albermann K."/>
            <person name="Hani J."/>
            <person name="Heumann K."/>
            <person name="Kleine K."/>
            <person name="Mewes H.-W."/>
            <person name="Zollner A."/>
            <person name="Zaccaria P."/>
        </authorList>
    </citation>
    <scope>NUCLEOTIDE SEQUENCE [LARGE SCALE GENOMIC DNA]</scope>
    <source>
        <strain>ATCC 204508 / S288c</strain>
    </source>
</reference>
<reference key="3">
    <citation type="journal article" date="2014" name="G3 (Bethesda)">
        <title>The reference genome sequence of Saccharomyces cerevisiae: Then and now.</title>
        <authorList>
            <person name="Engel S.R."/>
            <person name="Dietrich F.S."/>
            <person name="Fisk D.G."/>
            <person name="Binkley G."/>
            <person name="Balakrishnan R."/>
            <person name="Costanzo M.C."/>
            <person name="Dwight S.S."/>
            <person name="Hitz B.C."/>
            <person name="Karra K."/>
            <person name="Nash R.S."/>
            <person name="Weng S."/>
            <person name="Wong E.D."/>
            <person name="Lloyd P."/>
            <person name="Skrzypek M.S."/>
            <person name="Miyasato S.R."/>
            <person name="Simison M."/>
            <person name="Cherry J.M."/>
        </authorList>
    </citation>
    <scope>GENOME REANNOTATION</scope>
    <scope>SEQUENCE REVISION TO 592</scope>
    <source>
        <strain>ATCC 204508 / S288c</strain>
    </source>
</reference>
<reference key="4">
    <citation type="journal article" date="2003" name="J. Biol. Chem.">
        <title>ATP22, a nuclear gene required for expression of the F0 sector of mitochondrial ATPase in Saccharomyces cerevisiae.</title>
        <authorList>
            <person name="Helfenbein K.G."/>
            <person name="Ellis T.P."/>
            <person name="Dieckmann C.L."/>
            <person name="Tzagoloff A."/>
        </authorList>
    </citation>
    <scope>FUNCTION</scope>
    <scope>SUBCELLULAR LOCATION</scope>
</reference>
<reference key="5">
    <citation type="journal article" date="2007" name="Genetics">
        <title>The Saccharomyces cerevisiae ATP22 gene codes for the mitochondrial ATPase subunit 6-specific translation factor.</title>
        <authorList>
            <person name="Zeng X."/>
            <person name="Hourset A."/>
            <person name="Tzagoloff A."/>
        </authorList>
    </citation>
    <scope>FUNCTION</scope>
</reference>
<gene>
    <name type="primary">ATP22</name>
    <name type="synonym">TCM10</name>
    <name type="ordered locus">YDR350C</name>
    <name type="ORF">D9476.9</name>
</gene>
<accession>P50273</accession>
<accession>D6VSY0</accession>
<dbReference type="EMBL" id="U32306">
    <property type="protein sequence ID" value="AAA74031.1"/>
    <property type="molecule type" value="Genomic_DNA"/>
</dbReference>
<dbReference type="EMBL" id="U28372">
    <property type="protein sequence ID" value="AAB64786.1"/>
    <property type="status" value="ALT_FRAME"/>
    <property type="molecule type" value="Genomic_DNA"/>
</dbReference>
<dbReference type="EMBL" id="BK006938">
    <property type="protein sequence ID" value="DAA12190.2"/>
    <property type="molecule type" value="Genomic_DNA"/>
</dbReference>
<dbReference type="PIR" id="S61147">
    <property type="entry name" value="S61147"/>
</dbReference>
<dbReference type="RefSeq" id="NP_010637.4">
    <property type="nucleotide sequence ID" value="NM_001180658.4"/>
</dbReference>
<dbReference type="BioGRID" id="32407">
    <property type="interactions" value="81"/>
</dbReference>
<dbReference type="DIP" id="DIP-5246N"/>
<dbReference type="FunCoup" id="P50273">
    <property type="interactions" value="45"/>
</dbReference>
<dbReference type="IntAct" id="P50273">
    <property type="interactions" value="6"/>
</dbReference>
<dbReference type="MINT" id="P50273"/>
<dbReference type="STRING" id="4932.YDR350C"/>
<dbReference type="GlyGen" id="P50273">
    <property type="glycosylation" value="2 sites, 1 O-linked glycan (2 sites)"/>
</dbReference>
<dbReference type="PaxDb" id="4932-YDR350C"/>
<dbReference type="PeptideAtlas" id="P50273"/>
<dbReference type="EnsemblFungi" id="YDR350C_mRNA">
    <property type="protein sequence ID" value="YDR350C"/>
    <property type="gene ID" value="YDR350C"/>
</dbReference>
<dbReference type="GeneID" id="851952"/>
<dbReference type="KEGG" id="sce:YDR350C"/>
<dbReference type="AGR" id="SGD:S000002758"/>
<dbReference type="SGD" id="S000002758">
    <property type="gene designation" value="ATP22"/>
</dbReference>
<dbReference type="VEuPathDB" id="FungiDB:YDR350C"/>
<dbReference type="eggNOG" id="ENOG502QUX9">
    <property type="taxonomic scope" value="Eukaryota"/>
</dbReference>
<dbReference type="HOGENOM" id="CLU_024415_0_0_1"/>
<dbReference type="InParanoid" id="P50273"/>
<dbReference type="OMA" id="HINNCSE"/>
<dbReference type="OrthoDB" id="4064138at2759"/>
<dbReference type="BioCyc" id="YEAST:G3O-29904-MONOMER"/>
<dbReference type="BioGRID-ORCS" id="851952">
    <property type="hits" value="0 hits in 10 CRISPR screens"/>
</dbReference>
<dbReference type="PRO" id="PR:P50273"/>
<dbReference type="Proteomes" id="UP000002311">
    <property type="component" value="Chromosome IV"/>
</dbReference>
<dbReference type="RNAct" id="P50273">
    <property type="molecule type" value="protein"/>
</dbReference>
<dbReference type="GO" id="GO:0005743">
    <property type="term" value="C:mitochondrial inner membrane"/>
    <property type="evidence" value="ECO:0000314"/>
    <property type="project" value="SGD"/>
</dbReference>
<dbReference type="GO" id="GO:0045182">
    <property type="term" value="F:translation regulator activity"/>
    <property type="evidence" value="ECO:0000315"/>
    <property type="project" value="SGD"/>
</dbReference>
<dbReference type="GO" id="GO:0070131">
    <property type="term" value="P:positive regulation of mitochondrial translation"/>
    <property type="evidence" value="ECO:0000315"/>
    <property type="project" value="SGD"/>
</dbReference>
<dbReference type="GO" id="GO:0070071">
    <property type="term" value="P:proton-transporting two-sector ATPase complex assembly"/>
    <property type="evidence" value="ECO:0000315"/>
    <property type="project" value="SGD"/>
</dbReference>
<dbReference type="InterPro" id="IPR017207">
    <property type="entry name" value="Atp22"/>
</dbReference>
<dbReference type="PIRSF" id="PIRSF037437">
    <property type="entry name" value="Atp22"/>
    <property type="match status" value="1"/>
</dbReference>
<proteinExistence type="inferred from homology"/>
<evidence type="ECO:0000255" key="1"/>
<evidence type="ECO:0000269" key="2">
    <source>
    </source>
</evidence>
<evidence type="ECO:0000269" key="3">
    <source>
    </source>
</evidence>
<evidence type="ECO:0000305" key="4"/>
<sequence>MLKCICRVYSQPLAQMVTSPLFKHMGSAGTYTILPITNLRHLSTKNCPLKIKSNRSEPLQFGDFERQVPCSRKSGSSKNVQKRLYELRQLKTVLSETFGVTEYASFFESLRNALHINNCSENEKKKLLYDIILHQHELYPEVARKIGFYLPGEVHRWFWYHIPKSESFNHYLFLLKSDVLLFTSNYCTRFTNRLIKGTEMERQLATFQIFLHDETNIKFIMEKVLKLHTFDSLIALVNGLVKAKNFRFIKVFIQALLQKLEQHCYSGKDGAKQKNLRYVKFNNTLLYYLLKSGNVELFIKTFQEELKFIVSSGLLNHIDGNEHILNFPIHHYLNLLRISNRQEELFNVISCLQSSPLMKYKLFKEFLMGELIASFQAFRDPKLVCKYLLSSYSSKASANILNALGIWGWLYHSKSTTLTAPTLARELKNKNNILPNTMRIGSPVTVPILTELYRSLLSSSSVSLESGQFKNCLLDLYYKYKSFLSEEAHKYRYWRNDTGILNVFLNYIRFQAREPRLAYNVLLDFYSQPFAKKVVLTTTLCPFSIVAYKNHTLTQAELSELLQVMHKNGVPLTFKFCSAMVMHYVKMRDEKGARSWYNKILFGGFEIRHMALIQIIKDQGWPFPKNFDETLLTELVENNNIKEPTDSTLFTDEDMFEEDGKPRFNDDDVNKCTNIIRETLKSLN</sequence>
<protein>
    <recommendedName>
        <fullName>Mitochondrial translation factor ATP22</fullName>
    </recommendedName>
</protein>
<feature type="transit peptide" description="Mitochondrion" evidence="1">
    <location>
        <begin position="1"/>
        <end position="56"/>
    </location>
</feature>
<feature type="chain" id="PRO_0000072452" description="Mitochondrial translation factor ATP22">
    <location>
        <begin position="57"/>
        <end position="684"/>
    </location>
</feature>
<keyword id="KW-0472">Membrane</keyword>
<keyword id="KW-0496">Mitochondrion</keyword>
<keyword id="KW-0999">Mitochondrion inner membrane</keyword>
<keyword id="KW-1185">Reference proteome</keyword>
<keyword id="KW-0809">Transit peptide</keyword>
<keyword id="KW-0810">Translation regulation</keyword>
<organism>
    <name type="scientific">Saccharomyces cerevisiae (strain ATCC 204508 / S288c)</name>
    <name type="common">Baker's yeast</name>
    <dbReference type="NCBI Taxonomy" id="559292"/>
    <lineage>
        <taxon>Eukaryota</taxon>
        <taxon>Fungi</taxon>
        <taxon>Dikarya</taxon>
        <taxon>Ascomycota</taxon>
        <taxon>Saccharomycotina</taxon>
        <taxon>Saccharomycetes</taxon>
        <taxon>Saccharomycetales</taxon>
        <taxon>Saccharomycetaceae</taxon>
        <taxon>Saccharomyces</taxon>
    </lineage>
</organism>